<evidence type="ECO:0000255" key="1"/>
<evidence type="ECO:0000256" key="2">
    <source>
        <dbReference type="SAM" id="MobiDB-lite"/>
    </source>
</evidence>
<evidence type="ECO:0000305" key="3"/>
<reference key="1">
    <citation type="journal article" date="1997" name="Nature">
        <title>The complete genome sequence of the Gram-positive bacterium Bacillus subtilis.</title>
        <authorList>
            <person name="Kunst F."/>
            <person name="Ogasawara N."/>
            <person name="Moszer I."/>
            <person name="Albertini A.M."/>
            <person name="Alloni G."/>
            <person name="Azevedo V."/>
            <person name="Bertero M.G."/>
            <person name="Bessieres P."/>
            <person name="Bolotin A."/>
            <person name="Borchert S."/>
            <person name="Borriss R."/>
            <person name="Boursier L."/>
            <person name="Brans A."/>
            <person name="Braun M."/>
            <person name="Brignell S.C."/>
            <person name="Bron S."/>
            <person name="Brouillet S."/>
            <person name="Bruschi C.V."/>
            <person name="Caldwell B."/>
            <person name="Capuano V."/>
            <person name="Carter N.M."/>
            <person name="Choi S.-K."/>
            <person name="Codani J.-J."/>
            <person name="Connerton I.F."/>
            <person name="Cummings N.J."/>
            <person name="Daniel R.A."/>
            <person name="Denizot F."/>
            <person name="Devine K.M."/>
            <person name="Duesterhoeft A."/>
            <person name="Ehrlich S.D."/>
            <person name="Emmerson P.T."/>
            <person name="Entian K.-D."/>
            <person name="Errington J."/>
            <person name="Fabret C."/>
            <person name="Ferrari E."/>
            <person name="Foulger D."/>
            <person name="Fritz C."/>
            <person name="Fujita M."/>
            <person name="Fujita Y."/>
            <person name="Fuma S."/>
            <person name="Galizzi A."/>
            <person name="Galleron N."/>
            <person name="Ghim S.-Y."/>
            <person name="Glaser P."/>
            <person name="Goffeau A."/>
            <person name="Golightly E.J."/>
            <person name="Grandi G."/>
            <person name="Guiseppi G."/>
            <person name="Guy B.J."/>
            <person name="Haga K."/>
            <person name="Haiech J."/>
            <person name="Harwood C.R."/>
            <person name="Henaut A."/>
            <person name="Hilbert H."/>
            <person name="Holsappel S."/>
            <person name="Hosono S."/>
            <person name="Hullo M.-F."/>
            <person name="Itaya M."/>
            <person name="Jones L.-M."/>
            <person name="Joris B."/>
            <person name="Karamata D."/>
            <person name="Kasahara Y."/>
            <person name="Klaerr-Blanchard M."/>
            <person name="Klein C."/>
            <person name="Kobayashi Y."/>
            <person name="Koetter P."/>
            <person name="Koningstein G."/>
            <person name="Krogh S."/>
            <person name="Kumano M."/>
            <person name="Kurita K."/>
            <person name="Lapidus A."/>
            <person name="Lardinois S."/>
            <person name="Lauber J."/>
            <person name="Lazarevic V."/>
            <person name="Lee S.-M."/>
            <person name="Levine A."/>
            <person name="Liu H."/>
            <person name="Masuda S."/>
            <person name="Mauel C."/>
            <person name="Medigue C."/>
            <person name="Medina N."/>
            <person name="Mellado R.P."/>
            <person name="Mizuno M."/>
            <person name="Moestl D."/>
            <person name="Nakai S."/>
            <person name="Noback M."/>
            <person name="Noone D."/>
            <person name="O'Reilly M."/>
            <person name="Ogawa K."/>
            <person name="Ogiwara A."/>
            <person name="Oudega B."/>
            <person name="Park S.-H."/>
            <person name="Parro V."/>
            <person name="Pohl T.M."/>
            <person name="Portetelle D."/>
            <person name="Porwollik S."/>
            <person name="Prescott A.M."/>
            <person name="Presecan E."/>
            <person name="Pujic P."/>
            <person name="Purnelle B."/>
            <person name="Rapoport G."/>
            <person name="Rey M."/>
            <person name="Reynolds S."/>
            <person name="Rieger M."/>
            <person name="Rivolta C."/>
            <person name="Rocha E."/>
            <person name="Roche B."/>
            <person name="Rose M."/>
            <person name="Sadaie Y."/>
            <person name="Sato T."/>
            <person name="Scanlan E."/>
            <person name="Schleich S."/>
            <person name="Schroeter R."/>
            <person name="Scoffone F."/>
            <person name="Sekiguchi J."/>
            <person name="Sekowska A."/>
            <person name="Seror S.J."/>
            <person name="Serror P."/>
            <person name="Shin B.-S."/>
            <person name="Soldo B."/>
            <person name="Sorokin A."/>
            <person name="Tacconi E."/>
            <person name="Takagi T."/>
            <person name="Takahashi H."/>
            <person name="Takemaru K."/>
            <person name="Takeuchi M."/>
            <person name="Tamakoshi A."/>
            <person name="Tanaka T."/>
            <person name="Terpstra P."/>
            <person name="Tognoni A."/>
            <person name="Tosato V."/>
            <person name="Uchiyama S."/>
            <person name="Vandenbol M."/>
            <person name="Vannier F."/>
            <person name="Vassarotti A."/>
            <person name="Viari A."/>
            <person name="Wambutt R."/>
            <person name="Wedler E."/>
            <person name="Wedler H."/>
            <person name="Weitzenegger T."/>
            <person name="Winters P."/>
            <person name="Wipat A."/>
            <person name="Yamamoto H."/>
            <person name="Yamane K."/>
            <person name="Yasumoto K."/>
            <person name="Yata K."/>
            <person name="Yoshida K."/>
            <person name="Yoshikawa H.-F."/>
            <person name="Zumstein E."/>
            <person name="Yoshikawa H."/>
            <person name="Danchin A."/>
        </authorList>
    </citation>
    <scope>NUCLEOTIDE SEQUENCE [LARGE SCALE GENOMIC DNA]</scope>
    <source>
        <strain>168</strain>
    </source>
</reference>
<reference key="2">
    <citation type="submission" date="1997-01" db="EMBL/GenBank/DDBJ databases">
        <title>Cloning of a putative mdr gene from Bacillus subtilis.</title>
        <authorList>
            <person name="De Rossi E."/>
        </authorList>
    </citation>
    <scope>NUCLEOTIDE SEQUENCE [GENOMIC DNA] OF 1-192</scope>
    <source>
        <strain>PB1831</strain>
    </source>
</reference>
<feature type="chain" id="PRO_0000349886" description="Uncharacterized MFS-type transporter YubD">
    <location>
        <begin position="1"/>
        <end position="511"/>
    </location>
</feature>
<feature type="transmembrane region" description="Helical" evidence="1">
    <location>
        <begin position="7"/>
        <end position="27"/>
    </location>
</feature>
<feature type="transmembrane region" description="Helical" evidence="1">
    <location>
        <begin position="46"/>
        <end position="66"/>
    </location>
</feature>
<feature type="transmembrane region" description="Helical" evidence="1">
    <location>
        <begin position="80"/>
        <end position="100"/>
    </location>
</feature>
<feature type="transmembrane region" description="Helical" evidence="1">
    <location>
        <begin position="107"/>
        <end position="127"/>
    </location>
</feature>
<feature type="transmembrane region" description="Helical" evidence="1">
    <location>
        <begin position="134"/>
        <end position="154"/>
    </location>
</feature>
<feature type="transmembrane region" description="Helical" evidence="1">
    <location>
        <begin position="163"/>
        <end position="183"/>
    </location>
</feature>
<feature type="transmembrane region" description="Helical" evidence="1">
    <location>
        <begin position="200"/>
        <end position="220"/>
    </location>
</feature>
<feature type="transmembrane region" description="Helical" evidence="1">
    <location>
        <begin position="226"/>
        <end position="246"/>
    </location>
</feature>
<feature type="transmembrane region" description="Helical" evidence="1">
    <location>
        <begin position="266"/>
        <end position="286"/>
    </location>
</feature>
<feature type="transmembrane region" description="Helical" evidence="1">
    <location>
        <begin position="301"/>
        <end position="321"/>
    </location>
</feature>
<feature type="transmembrane region" description="Helical" evidence="1">
    <location>
        <begin position="329"/>
        <end position="349"/>
    </location>
</feature>
<feature type="transmembrane region" description="Helical" evidence="1">
    <location>
        <begin position="357"/>
        <end position="377"/>
    </location>
</feature>
<feature type="transmembrane region" description="Helical" evidence="1">
    <location>
        <begin position="394"/>
        <end position="414"/>
    </location>
</feature>
<feature type="transmembrane region" description="Helical" evidence="1">
    <location>
        <begin position="437"/>
        <end position="457"/>
    </location>
</feature>
<feature type="region of interest" description="Disordered" evidence="2">
    <location>
        <begin position="465"/>
        <end position="486"/>
    </location>
</feature>
<accession>O32084</accession>
<accession>P94508</accession>
<keyword id="KW-1003">Cell membrane</keyword>
<keyword id="KW-0472">Membrane</keyword>
<keyword id="KW-1185">Reference proteome</keyword>
<keyword id="KW-0812">Transmembrane</keyword>
<keyword id="KW-1133">Transmembrane helix</keyword>
<keyword id="KW-0813">Transport</keyword>
<organism>
    <name type="scientific">Bacillus subtilis (strain 168)</name>
    <dbReference type="NCBI Taxonomy" id="224308"/>
    <lineage>
        <taxon>Bacteria</taxon>
        <taxon>Bacillati</taxon>
        <taxon>Bacillota</taxon>
        <taxon>Bacilli</taxon>
        <taxon>Bacillales</taxon>
        <taxon>Bacillaceae</taxon>
        <taxon>Bacillus</taxon>
    </lineage>
</organism>
<protein>
    <recommendedName>
        <fullName>Uncharacterized MFS-type transporter YubD</fullName>
    </recommendedName>
</protein>
<proteinExistence type="inferred from homology"/>
<comment type="subcellular location">
    <subcellularLocation>
        <location>Cell membrane</location>
        <topology>Multi-pass membrane protein</topology>
    </subcellularLocation>
</comment>
<comment type="similarity">
    <text evidence="3">Belongs to the major facilitator superfamily.</text>
</comment>
<comment type="sequence caution" evidence="3">
    <conflict type="miscellaneous discrepancy">
        <sequence resource="EMBL-CDS" id="AAB47704"/>
    </conflict>
</comment>
<gene>
    <name type="primary">yubD</name>
    <name type="ordered locus">BSU31130</name>
</gene>
<name>YUBD_BACSU</name>
<sequence>MKTKHYWVISLLAVLAVGPGLMSNTALSSVQGLVQKTVGTSVFTSVNPILIGNMAFALLVPAGPLLRKKFGARPVYLASLPVFILGSLLIACSGDIALMAAGRFLQGAATGVMLMIMIPMLVLSFPIERRNYALLVLIGGFYGSVIIGTILGTIATSCGHWRWLFFIFGTLSLIGVAVSYFFLHDEHHGAADQEQPLDRAGILLSVFLAAASAVSFIFLQKWGLSSGYVWIGFGVTLCLLIGLLIVEYKVKNPFISIKLMLLPKPVLGLLIIAAGTITVAVSLSAFQGLLRQMYDISQEHLILLSLTLLIGVAIAAILSALLYDKVGPGMLGIIGGLILVFVNFQWLHIQDRSSLYMFAALFIMLAAGTGLTVAAGLMGAAMGGPLPDLVKRMTAVQFLRLFVYMGVPILIGFFTKKDAARQSGSVQDSMMTAYHDLFFISFILSVLLVCLSFCMNATGMGHKLAHKPHDKAKTAPEKPAVSAQGLSKATVKSYKVINDTEYRNALRNLQK</sequence>
<dbReference type="EMBL" id="AL009126">
    <property type="protein sequence ID" value="CAB15091.1"/>
    <property type="molecule type" value="Genomic_DNA"/>
</dbReference>
<dbReference type="EMBL" id="U87792">
    <property type="protein sequence ID" value="AAB47704.1"/>
    <property type="status" value="ALT_SEQ"/>
    <property type="molecule type" value="Genomic_DNA"/>
</dbReference>
<dbReference type="PIR" id="G70006">
    <property type="entry name" value="G70006"/>
</dbReference>
<dbReference type="RefSeq" id="NP_390991.1">
    <property type="nucleotide sequence ID" value="NC_000964.3"/>
</dbReference>
<dbReference type="RefSeq" id="WP_003243120.1">
    <property type="nucleotide sequence ID" value="NZ_OZ025638.1"/>
</dbReference>
<dbReference type="SMR" id="O32084"/>
<dbReference type="FunCoup" id="O32084">
    <property type="interactions" value="57"/>
</dbReference>
<dbReference type="STRING" id="224308.BSU31130"/>
<dbReference type="TCDB" id="2.A.1.3.55">
    <property type="family name" value="the major facilitator superfamily (mfs)"/>
</dbReference>
<dbReference type="PaxDb" id="224308-BSU31130"/>
<dbReference type="EnsemblBacteria" id="CAB15091">
    <property type="protein sequence ID" value="CAB15091"/>
    <property type="gene ID" value="BSU_31130"/>
</dbReference>
<dbReference type="GeneID" id="938834"/>
<dbReference type="KEGG" id="bsu:BSU31130"/>
<dbReference type="PATRIC" id="fig|224308.179.peg.3373"/>
<dbReference type="eggNOG" id="COG0477">
    <property type="taxonomic scope" value="Bacteria"/>
</dbReference>
<dbReference type="InParanoid" id="O32084"/>
<dbReference type="OrthoDB" id="2370008at2"/>
<dbReference type="BioCyc" id="BSUB:BSU31130-MONOMER"/>
<dbReference type="Proteomes" id="UP000001570">
    <property type="component" value="Chromosome"/>
</dbReference>
<dbReference type="GO" id="GO:0005886">
    <property type="term" value="C:plasma membrane"/>
    <property type="evidence" value="ECO:0000318"/>
    <property type="project" value="GO_Central"/>
</dbReference>
<dbReference type="GO" id="GO:0022857">
    <property type="term" value="F:transmembrane transporter activity"/>
    <property type="evidence" value="ECO:0000318"/>
    <property type="project" value="GO_Central"/>
</dbReference>
<dbReference type="GO" id="GO:0055085">
    <property type="term" value="P:transmembrane transport"/>
    <property type="evidence" value="ECO:0000318"/>
    <property type="project" value="GO_Central"/>
</dbReference>
<dbReference type="FunFam" id="1.20.1250.20:FF:000842">
    <property type="entry name" value="Putative efflux transporter"/>
    <property type="match status" value="1"/>
</dbReference>
<dbReference type="Gene3D" id="1.20.1250.20">
    <property type="entry name" value="MFS general substrate transporter like domains"/>
    <property type="match status" value="1"/>
</dbReference>
<dbReference type="InterPro" id="IPR011701">
    <property type="entry name" value="MFS"/>
</dbReference>
<dbReference type="InterPro" id="IPR020846">
    <property type="entry name" value="MFS_dom"/>
</dbReference>
<dbReference type="InterPro" id="IPR036259">
    <property type="entry name" value="MFS_trans_sf"/>
</dbReference>
<dbReference type="PANTHER" id="PTHR42718">
    <property type="entry name" value="MAJOR FACILITATOR SUPERFAMILY MULTIDRUG TRANSPORTER MFSC"/>
    <property type="match status" value="1"/>
</dbReference>
<dbReference type="PANTHER" id="PTHR42718:SF9">
    <property type="entry name" value="MAJOR FACILITATOR SUPERFAMILY MULTIDRUG TRANSPORTER MFSC"/>
    <property type="match status" value="1"/>
</dbReference>
<dbReference type="Pfam" id="PF07690">
    <property type="entry name" value="MFS_1"/>
    <property type="match status" value="1"/>
</dbReference>
<dbReference type="SUPFAM" id="SSF103473">
    <property type="entry name" value="MFS general substrate transporter"/>
    <property type="match status" value="1"/>
</dbReference>
<dbReference type="PROSITE" id="PS50850">
    <property type="entry name" value="MFS"/>
    <property type="match status" value="1"/>
</dbReference>